<sequence>MNNLRVKDDFDYEDIMDEESLMDNMNEHGKTLVHTEFFNSFEDDFEDEFEEDSLKFNVKNDNNNNNNFKKPESK</sequence>
<organism>
    <name type="scientific">Dictyostelium discoideum</name>
    <name type="common">Social amoeba</name>
    <dbReference type="NCBI Taxonomy" id="44689"/>
    <lineage>
        <taxon>Eukaryota</taxon>
        <taxon>Amoebozoa</taxon>
        <taxon>Evosea</taxon>
        <taxon>Eumycetozoa</taxon>
        <taxon>Dictyostelia</taxon>
        <taxon>Dictyosteliales</taxon>
        <taxon>Dictyosteliaceae</taxon>
        <taxon>Dictyostelium</taxon>
    </lineage>
</organism>
<reference key="1">
    <citation type="journal article" date="2005" name="Nature">
        <title>The genome of the social amoeba Dictyostelium discoideum.</title>
        <authorList>
            <person name="Eichinger L."/>
            <person name="Pachebat J.A."/>
            <person name="Gloeckner G."/>
            <person name="Rajandream M.A."/>
            <person name="Sucgang R."/>
            <person name="Berriman M."/>
            <person name="Song J."/>
            <person name="Olsen R."/>
            <person name="Szafranski K."/>
            <person name="Xu Q."/>
            <person name="Tunggal B."/>
            <person name="Kummerfeld S."/>
            <person name="Madera M."/>
            <person name="Konfortov B.A."/>
            <person name="Rivero F."/>
            <person name="Bankier A.T."/>
            <person name="Lehmann R."/>
            <person name="Hamlin N."/>
            <person name="Davies R."/>
            <person name="Gaudet P."/>
            <person name="Fey P."/>
            <person name="Pilcher K."/>
            <person name="Chen G."/>
            <person name="Saunders D."/>
            <person name="Sodergren E.J."/>
            <person name="Davis P."/>
            <person name="Kerhornou A."/>
            <person name="Nie X."/>
            <person name="Hall N."/>
            <person name="Anjard C."/>
            <person name="Hemphill L."/>
            <person name="Bason N."/>
            <person name="Farbrother P."/>
            <person name="Desany B."/>
            <person name="Just E."/>
            <person name="Morio T."/>
            <person name="Rost R."/>
            <person name="Churcher C.M."/>
            <person name="Cooper J."/>
            <person name="Haydock S."/>
            <person name="van Driessche N."/>
            <person name="Cronin A."/>
            <person name="Goodhead I."/>
            <person name="Muzny D.M."/>
            <person name="Mourier T."/>
            <person name="Pain A."/>
            <person name="Lu M."/>
            <person name="Harper D."/>
            <person name="Lindsay R."/>
            <person name="Hauser H."/>
            <person name="James K.D."/>
            <person name="Quiles M."/>
            <person name="Madan Babu M."/>
            <person name="Saito T."/>
            <person name="Buchrieser C."/>
            <person name="Wardroper A."/>
            <person name="Felder M."/>
            <person name="Thangavelu M."/>
            <person name="Johnson D."/>
            <person name="Knights A."/>
            <person name="Loulseged H."/>
            <person name="Mungall K.L."/>
            <person name="Oliver K."/>
            <person name="Price C."/>
            <person name="Quail M.A."/>
            <person name="Urushihara H."/>
            <person name="Hernandez J."/>
            <person name="Rabbinowitsch E."/>
            <person name="Steffen D."/>
            <person name="Sanders M."/>
            <person name="Ma J."/>
            <person name="Kohara Y."/>
            <person name="Sharp S."/>
            <person name="Simmonds M.N."/>
            <person name="Spiegler S."/>
            <person name="Tivey A."/>
            <person name="Sugano S."/>
            <person name="White B."/>
            <person name="Walker D."/>
            <person name="Woodward J.R."/>
            <person name="Winckler T."/>
            <person name="Tanaka Y."/>
            <person name="Shaulsky G."/>
            <person name="Schleicher M."/>
            <person name="Weinstock G.M."/>
            <person name="Rosenthal A."/>
            <person name="Cox E.C."/>
            <person name="Chisholm R.L."/>
            <person name="Gibbs R.A."/>
            <person name="Loomis W.F."/>
            <person name="Platzer M."/>
            <person name="Kay R.R."/>
            <person name="Williams J.G."/>
            <person name="Dear P.H."/>
            <person name="Noegel A.A."/>
            <person name="Barrell B.G."/>
            <person name="Kuspa A."/>
        </authorList>
    </citation>
    <scope>NUCLEOTIDE SEQUENCE [LARGE SCALE GENOMIC DNA]</scope>
    <source>
        <strain>AX4</strain>
    </source>
</reference>
<proteinExistence type="predicted"/>
<keyword id="KW-1185">Reference proteome</keyword>
<feature type="chain" id="PRO_0000346933" description="Uncharacterized protein DDB_G0289957">
    <location>
        <begin position="1"/>
        <end position="74"/>
    </location>
</feature>
<accession>Q54GR2</accession>
<gene>
    <name type="ORF">DDB_G0289957</name>
</gene>
<name>Y8669_DICDI</name>
<protein>
    <recommendedName>
        <fullName>Uncharacterized protein DDB_G0289957</fullName>
    </recommendedName>
</protein>
<dbReference type="EMBL" id="AAFI02000149">
    <property type="protein sequence ID" value="EAL62491.1"/>
    <property type="molecule type" value="Genomic_DNA"/>
</dbReference>
<dbReference type="RefSeq" id="XP_636007.1">
    <property type="nucleotide sequence ID" value="XM_630915.1"/>
</dbReference>
<dbReference type="FunCoup" id="Q54GR2">
    <property type="interactions" value="877"/>
</dbReference>
<dbReference type="PaxDb" id="44689-DDB0188669"/>
<dbReference type="EnsemblProtists" id="EAL62491">
    <property type="protein sequence ID" value="EAL62491"/>
    <property type="gene ID" value="DDB_G0289957"/>
</dbReference>
<dbReference type="GeneID" id="8627422"/>
<dbReference type="KEGG" id="ddi:DDB_G0289957"/>
<dbReference type="dictyBase" id="DDB_G0289957"/>
<dbReference type="eggNOG" id="ENOG502RINA">
    <property type="taxonomic scope" value="Eukaryota"/>
</dbReference>
<dbReference type="HOGENOM" id="CLU_2692967_0_0_1"/>
<dbReference type="InParanoid" id="Q54GR2"/>
<dbReference type="OMA" id="IVHTDFF"/>
<dbReference type="PRO" id="PR:Q54GR2"/>
<dbReference type="Proteomes" id="UP000002195">
    <property type="component" value="Chromosome 5"/>
</dbReference>